<comment type="function">
    <text evidence="1">Protein S19 forms a complex with S13 that binds strongly to the 16S ribosomal RNA.</text>
</comment>
<comment type="similarity">
    <text evidence="1">Belongs to the universal ribosomal protein uS19 family.</text>
</comment>
<name>RS19_VIBVU</name>
<protein>
    <recommendedName>
        <fullName evidence="1">Small ribosomal subunit protein uS19</fullName>
    </recommendedName>
    <alternativeName>
        <fullName evidence="2">30S ribosomal protein S19</fullName>
    </alternativeName>
</protein>
<dbReference type="EMBL" id="AE016795">
    <property type="protein sequence ID" value="AAO09266.1"/>
    <property type="molecule type" value="Genomic_DNA"/>
</dbReference>
<dbReference type="RefSeq" id="WP_011078827.1">
    <property type="nucleotide sequence ID" value="NC_004459.3"/>
</dbReference>
<dbReference type="SMR" id="Q8DE43"/>
<dbReference type="GeneID" id="95678951"/>
<dbReference type="KEGG" id="vvu:VV1_0758"/>
<dbReference type="HOGENOM" id="CLU_144911_0_1_6"/>
<dbReference type="Proteomes" id="UP000002275">
    <property type="component" value="Chromosome 1"/>
</dbReference>
<dbReference type="GO" id="GO:0005737">
    <property type="term" value="C:cytoplasm"/>
    <property type="evidence" value="ECO:0007669"/>
    <property type="project" value="UniProtKB-ARBA"/>
</dbReference>
<dbReference type="GO" id="GO:0015935">
    <property type="term" value="C:small ribosomal subunit"/>
    <property type="evidence" value="ECO:0007669"/>
    <property type="project" value="InterPro"/>
</dbReference>
<dbReference type="GO" id="GO:0019843">
    <property type="term" value="F:rRNA binding"/>
    <property type="evidence" value="ECO:0007669"/>
    <property type="project" value="UniProtKB-UniRule"/>
</dbReference>
<dbReference type="GO" id="GO:0003735">
    <property type="term" value="F:structural constituent of ribosome"/>
    <property type="evidence" value="ECO:0007669"/>
    <property type="project" value="InterPro"/>
</dbReference>
<dbReference type="GO" id="GO:0000028">
    <property type="term" value="P:ribosomal small subunit assembly"/>
    <property type="evidence" value="ECO:0007669"/>
    <property type="project" value="TreeGrafter"/>
</dbReference>
<dbReference type="GO" id="GO:0006412">
    <property type="term" value="P:translation"/>
    <property type="evidence" value="ECO:0007669"/>
    <property type="project" value="UniProtKB-UniRule"/>
</dbReference>
<dbReference type="FunFam" id="3.30.860.10:FF:000001">
    <property type="entry name" value="30S ribosomal protein S19"/>
    <property type="match status" value="1"/>
</dbReference>
<dbReference type="Gene3D" id="3.30.860.10">
    <property type="entry name" value="30s Ribosomal Protein S19, Chain A"/>
    <property type="match status" value="1"/>
</dbReference>
<dbReference type="HAMAP" id="MF_00531">
    <property type="entry name" value="Ribosomal_uS19"/>
    <property type="match status" value="1"/>
</dbReference>
<dbReference type="InterPro" id="IPR002222">
    <property type="entry name" value="Ribosomal_uS19"/>
</dbReference>
<dbReference type="InterPro" id="IPR005732">
    <property type="entry name" value="Ribosomal_uS19_bac-type"/>
</dbReference>
<dbReference type="InterPro" id="IPR020934">
    <property type="entry name" value="Ribosomal_uS19_CS"/>
</dbReference>
<dbReference type="InterPro" id="IPR023575">
    <property type="entry name" value="Ribosomal_uS19_SF"/>
</dbReference>
<dbReference type="NCBIfam" id="TIGR01050">
    <property type="entry name" value="rpsS_bact"/>
    <property type="match status" value="1"/>
</dbReference>
<dbReference type="PANTHER" id="PTHR11880">
    <property type="entry name" value="RIBOSOMAL PROTEIN S19P FAMILY MEMBER"/>
    <property type="match status" value="1"/>
</dbReference>
<dbReference type="PANTHER" id="PTHR11880:SF8">
    <property type="entry name" value="SMALL RIBOSOMAL SUBUNIT PROTEIN US19M"/>
    <property type="match status" value="1"/>
</dbReference>
<dbReference type="Pfam" id="PF00203">
    <property type="entry name" value="Ribosomal_S19"/>
    <property type="match status" value="1"/>
</dbReference>
<dbReference type="PIRSF" id="PIRSF002144">
    <property type="entry name" value="Ribosomal_S19"/>
    <property type="match status" value="1"/>
</dbReference>
<dbReference type="PRINTS" id="PR00975">
    <property type="entry name" value="RIBOSOMALS19"/>
</dbReference>
<dbReference type="SUPFAM" id="SSF54570">
    <property type="entry name" value="Ribosomal protein S19"/>
    <property type="match status" value="1"/>
</dbReference>
<dbReference type="PROSITE" id="PS00323">
    <property type="entry name" value="RIBOSOMAL_S19"/>
    <property type="match status" value="1"/>
</dbReference>
<feature type="chain" id="PRO_0000129938" description="Small ribosomal subunit protein uS19">
    <location>
        <begin position="1"/>
        <end position="92"/>
    </location>
</feature>
<organism>
    <name type="scientific">Vibrio vulnificus (strain CMCP6)</name>
    <dbReference type="NCBI Taxonomy" id="216895"/>
    <lineage>
        <taxon>Bacteria</taxon>
        <taxon>Pseudomonadati</taxon>
        <taxon>Pseudomonadota</taxon>
        <taxon>Gammaproteobacteria</taxon>
        <taxon>Vibrionales</taxon>
        <taxon>Vibrionaceae</taxon>
        <taxon>Vibrio</taxon>
    </lineage>
</organism>
<gene>
    <name evidence="1" type="primary">rpsS</name>
    <name type="ordered locus">VV1_0758</name>
</gene>
<accession>Q8DE43</accession>
<keyword id="KW-0687">Ribonucleoprotein</keyword>
<keyword id="KW-0689">Ribosomal protein</keyword>
<keyword id="KW-0694">RNA-binding</keyword>
<keyword id="KW-0699">rRNA-binding</keyword>
<proteinExistence type="inferred from homology"/>
<sequence length="92" mass="10441">MPRSLKKGPFIDLHLLKKVEKAVESGDKKPLKTWSRRSMIIPTMIGLTIAVHNGRQHVPVFVTEEMIGHKLGEFAPTRTYRGHAADKKAKKR</sequence>
<evidence type="ECO:0000255" key="1">
    <source>
        <dbReference type="HAMAP-Rule" id="MF_00531"/>
    </source>
</evidence>
<evidence type="ECO:0000305" key="2"/>
<reference key="1">
    <citation type="submission" date="2002-12" db="EMBL/GenBank/DDBJ databases">
        <title>Complete genome sequence of Vibrio vulnificus CMCP6.</title>
        <authorList>
            <person name="Rhee J.H."/>
            <person name="Kim S.Y."/>
            <person name="Chung S.S."/>
            <person name="Kim J.J."/>
            <person name="Moon Y.H."/>
            <person name="Jeong H."/>
            <person name="Choy H.E."/>
        </authorList>
    </citation>
    <scope>NUCLEOTIDE SEQUENCE [LARGE SCALE GENOMIC DNA]</scope>
    <source>
        <strain>CMCP6</strain>
    </source>
</reference>